<accession>B1ZNE4</accession>
<gene>
    <name evidence="1" type="primary">rpsS</name>
    <name type="ordered locus">Oter_0222</name>
</gene>
<reference key="1">
    <citation type="journal article" date="2011" name="J. Bacteriol.">
        <title>Genome sequence of the verrucomicrobium Opitutus terrae PB90-1, an abundant inhabitant of rice paddy soil ecosystems.</title>
        <authorList>
            <person name="van Passel M.W."/>
            <person name="Kant R."/>
            <person name="Palva A."/>
            <person name="Copeland A."/>
            <person name="Lucas S."/>
            <person name="Lapidus A."/>
            <person name="Glavina del Rio T."/>
            <person name="Pitluck S."/>
            <person name="Goltsman E."/>
            <person name="Clum A."/>
            <person name="Sun H."/>
            <person name="Schmutz J."/>
            <person name="Larimer F.W."/>
            <person name="Land M.L."/>
            <person name="Hauser L."/>
            <person name="Kyrpides N."/>
            <person name="Mikhailova N."/>
            <person name="Richardson P.P."/>
            <person name="Janssen P.H."/>
            <person name="de Vos W.M."/>
            <person name="Smidt H."/>
        </authorList>
    </citation>
    <scope>NUCLEOTIDE SEQUENCE [LARGE SCALE GENOMIC DNA]</scope>
    <source>
        <strain>DSM 11246 / JCM 15787 / PB90-1</strain>
    </source>
</reference>
<protein>
    <recommendedName>
        <fullName evidence="1">Small ribosomal subunit protein uS19</fullName>
    </recommendedName>
    <alternativeName>
        <fullName evidence="2">30S ribosomal protein S19</fullName>
    </alternativeName>
</protein>
<name>RS19_OPITP</name>
<sequence length="91" mass="10308">MSRSIKKGFFVDYHLLEKIEKANKAGAKKPIQTWSRRSTITPDFVGHTFSVHNGKAFIAVYVTENMVGHKLGEFALTRIFKAHGGMTRKEI</sequence>
<evidence type="ECO:0000255" key="1">
    <source>
        <dbReference type="HAMAP-Rule" id="MF_00531"/>
    </source>
</evidence>
<evidence type="ECO:0000305" key="2"/>
<dbReference type="EMBL" id="CP001032">
    <property type="protein sequence ID" value="ACB73513.1"/>
    <property type="molecule type" value="Genomic_DNA"/>
</dbReference>
<dbReference type="RefSeq" id="WP_012373051.1">
    <property type="nucleotide sequence ID" value="NC_010571.1"/>
</dbReference>
<dbReference type="SMR" id="B1ZNE4"/>
<dbReference type="STRING" id="452637.Oter_0222"/>
<dbReference type="KEGG" id="ote:Oter_0222"/>
<dbReference type="eggNOG" id="COG0185">
    <property type="taxonomic scope" value="Bacteria"/>
</dbReference>
<dbReference type="HOGENOM" id="CLU_144911_0_1_0"/>
<dbReference type="OrthoDB" id="9797833at2"/>
<dbReference type="Proteomes" id="UP000007013">
    <property type="component" value="Chromosome"/>
</dbReference>
<dbReference type="GO" id="GO:0005737">
    <property type="term" value="C:cytoplasm"/>
    <property type="evidence" value="ECO:0007669"/>
    <property type="project" value="UniProtKB-ARBA"/>
</dbReference>
<dbReference type="GO" id="GO:0015935">
    <property type="term" value="C:small ribosomal subunit"/>
    <property type="evidence" value="ECO:0007669"/>
    <property type="project" value="InterPro"/>
</dbReference>
<dbReference type="GO" id="GO:0019843">
    <property type="term" value="F:rRNA binding"/>
    <property type="evidence" value="ECO:0007669"/>
    <property type="project" value="UniProtKB-UniRule"/>
</dbReference>
<dbReference type="GO" id="GO:0003735">
    <property type="term" value="F:structural constituent of ribosome"/>
    <property type="evidence" value="ECO:0007669"/>
    <property type="project" value="InterPro"/>
</dbReference>
<dbReference type="GO" id="GO:0000028">
    <property type="term" value="P:ribosomal small subunit assembly"/>
    <property type="evidence" value="ECO:0007669"/>
    <property type="project" value="TreeGrafter"/>
</dbReference>
<dbReference type="GO" id="GO:0006412">
    <property type="term" value="P:translation"/>
    <property type="evidence" value="ECO:0007669"/>
    <property type="project" value="UniProtKB-UniRule"/>
</dbReference>
<dbReference type="FunFam" id="3.30.860.10:FF:000001">
    <property type="entry name" value="30S ribosomal protein S19"/>
    <property type="match status" value="1"/>
</dbReference>
<dbReference type="Gene3D" id="3.30.860.10">
    <property type="entry name" value="30s Ribosomal Protein S19, Chain A"/>
    <property type="match status" value="1"/>
</dbReference>
<dbReference type="HAMAP" id="MF_00531">
    <property type="entry name" value="Ribosomal_uS19"/>
    <property type="match status" value="1"/>
</dbReference>
<dbReference type="InterPro" id="IPR002222">
    <property type="entry name" value="Ribosomal_uS19"/>
</dbReference>
<dbReference type="InterPro" id="IPR005732">
    <property type="entry name" value="Ribosomal_uS19_bac-type"/>
</dbReference>
<dbReference type="InterPro" id="IPR020934">
    <property type="entry name" value="Ribosomal_uS19_CS"/>
</dbReference>
<dbReference type="InterPro" id="IPR023575">
    <property type="entry name" value="Ribosomal_uS19_SF"/>
</dbReference>
<dbReference type="NCBIfam" id="TIGR01050">
    <property type="entry name" value="rpsS_bact"/>
    <property type="match status" value="1"/>
</dbReference>
<dbReference type="PANTHER" id="PTHR11880">
    <property type="entry name" value="RIBOSOMAL PROTEIN S19P FAMILY MEMBER"/>
    <property type="match status" value="1"/>
</dbReference>
<dbReference type="PANTHER" id="PTHR11880:SF8">
    <property type="entry name" value="SMALL RIBOSOMAL SUBUNIT PROTEIN US19M"/>
    <property type="match status" value="1"/>
</dbReference>
<dbReference type="Pfam" id="PF00203">
    <property type="entry name" value="Ribosomal_S19"/>
    <property type="match status" value="1"/>
</dbReference>
<dbReference type="PIRSF" id="PIRSF002144">
    <property type="entry name" value="Ribosomal_S19"/>
    <property type="match status" value="1"/>
</dbReference>
<dbReference type="PRINTS" id="PR00975">
    <property type="entry name" value="RIBOSOMALS19"/>
</dbReference>
<dbReference type="SUPFAM" id="SSF54570">
    <property type="entry name" value="Ribosomal protein S19"/>
    <property type="match status" value="1"/>
</dbReference>
<dbReference type="PROSITE" id="PS00323">
    <property type="entry name" value="RIBOSOMAL_S19"/>
    <property type="match status" value="1"/>
</dbReference>
<organism>
    <name type="scientific">Opitutus terrae (strain DSM 11246 / JCM 15787 / PB90-1)</name>
    <dbReference type="NCBI Taxonomy" id="452637"/>
    <lineage>
        <taxon>Bacteria</taxon>
        <taxon>Pseudomonadati</taxon>
        <taxon>Verrucomicrobiota</taxon>
        <taxon>Opitutia</taxon>
        <taxon>Opitutales</taxon>
        <taxon>Opitutaceae</taxon>
        <taxon>Opitutus</taxon>
    </lineage>
</organism>
<comment type="function">
    <text evidence="1">Protein S19 forms a complex with S13 that binds strongly to the 16S ribosomal RNA.</text>
</comment>
<comment type="similarity">
    <text evidence="1">Belongs to the universal ribosomal protein uS19 family.</text>
</comment>
<feature type="chain" id="PRO_1000128012" description="Small ribosomal subunit protein uS19">
    <location>
        <begin position="1"/>
        <end position="91"/>
    </location>
</feature>
<keyword id="KW-1185">Reference proteome</keyword>
<keyword id="KW-0687">Ribonucleoprotein</keyword>
<keyword id="KW-0689">Ribosomal protein</keyword>
<keyword id="KW-0694">RNA-binding</keyword>
<keyword id="KW-0699">rRNA-binding</keyword>
<proteinExistence type="inferred from homology"/>